<sequence length="81" mass="8899">MSHSVKIYDTCIGCTQCVRACPTDVLEMIPWDGCKAKQIASAPRTEDCVGCKRCESACPTDFLSVRVYLGPETTRSMALSY</sequence>
<protein>
    <recommendedName>
        <fullName evidence="2">Photosystem I iron-sulfur center</fullName>
        <ecNumber evidence="2">1.97.1.12</ecNumber>
    </recommendedName>
    <alternativeName>
        <fullName evidence="2">9 kDa polypeptide</fullName>
    </alternativeName>
    <alternativeName>
        <fullName evidence="2">PSI-C</fullName>
    </alternativeName>
    <alternativeName>
        <fullName evidence="2">Photosystem I subunit VII</fullName>
    </alternativeName>
    <alternativeName>
        <fullName evidence="2">PsaC</fullName>
    </alternativeName>
</protein>
<dbReference type="EC" id="1.97.1.12" evidence="2"/>
<dbReference type="EMBL" id="AY522329">
    <property type="protein sequence ID" value="AAS46093.1"/>
    <property type="molecule type" value="Genomic_DNA"/>
</dbReference>
<dbReference type="RefSeq" id="YP_009161420.1">
    <property type="nucleotide sequence ID" value="NC_027678.1"/>
</dbReference>
<dbReference type="RefSeq" id="YP_654253.1">
    <property type="nucleotide sequence ID" value="NC_008155.1"/>
</dbReference>
<dbReference type="SMR" id="P0C360"/>
<dbReference type="STRING" id="39946.P0C360"/>
<dbReference type="GeneID" id="4126910"/>
<dbReference type="Proteomes" id="UP000007015">
    <property type="component" value="Chloroplast"/>
</dbReference>
<dbReference type="GO" id="GO:0009535">
    <property type="term" value="C:chloroplast thylakoid membrane"/>
    <property type="evidence" value="ECO:0007669"/>
    <property type="project" value="UniProtKB-SubCell"/>
</dbReference>
<dbReference type="GO" id="GO:0009522">
    <property type="term" value="C:photosystem I"/>
    <property type="evidence" value="ECO:0007669"/>
    <property type="project" value="UniProtKB-KW"/>
</dbReference>
<dbReference type="GO" id="GO:0009536">
    <property type="term" value="C:plastid"/>
    <property type="evidence" value="ECO:0000305"/>
    <property type="project" value="Gramene"/>
</dbReference>
<dbReference type="GO" id="GO:0051539">
    <property type="term" value="F:4 iron, 4 sulfur cluster binding"/>
    <property type="evidence" value="ECO:0007669"/>
    <property type="project" value="UniProtKB-KW"/>
</dbReference>
<dbReference type="GO" id="GO:0009055">
    <property type="term" value="F:electron transfer activity"/>
    <property type="evidence" value="ECO:0007669"/>
    <property type="project" value="UniProtKB-UniRule"/>
</dbReference>
<dbReference type="GO" id="GO:0046872">
    <property type="term" value="F:metal ion binding"/>
    <property type="evidence" value="ECO:0007669"/>
    <property type="project" value="UniProtKB-KW"/>
</dbReference>
<dbReference type="GO" id="GO:0016491">
    <property type="term" value="F:oxidoreductase activity"/>
    <property type="evidence" value="ECO:0007669"/>
    <property type="project" value="UniProtKB-KW"/>
</dbReference>
<dbReference type="GO" id="GO:0009773">
    <property type="term" value="P:photosynthetic electron transport in photosystem I"/>
    <property type="evidence" value="ECO:0007669"/>
    <property type="project" value="InterPro"/>
</dbReference>
<dbReference type="FunFam" id="3.30.70.20:FF:000001">
    <property type="entry name" value="Photosystem I iron-sulfur center"/>
    <property type="match status" value="1"/>
</dbReference>
<dbReference type="Gene3D" id="3.30.70.20">
    <property type="match status" value="1"/>
</dbReference>
<dbReference type="HAMAP" id="MF_01303">
    <property type="entry name" value="PSI_PsaC"/>
    <property type="match status" value="1"/>
</dbReference>
<dbReference type="InterPro" id="IPR017896">
    <property type="entry name" value="4Fe4S_Fe-S-bd"/>
</dbReference>
<dbReference type="InterPro" id="IPR017900">
    <property type="entry name" value="4Fe4S_Fe_S_CS"/>
</dbReference>
<dbReference type="InterPro" id="IPR050157">
    <property type="entry name" value="PSI_iron-sulfur_center"/>
</dbReference>
<dbReference type="InterPro" id="IPR017491">
    <property type="entry name" value="PSI_PsaC"/>
</dbReference>
<dbReference type="NCBIfam" id="TIGR03048">
    <property type="entry name" value="PS_I_psaC"/>
    <property type="match status" value="1"/>
</dbReference>
<dbReference type="PANTHER" id="PTHR24960:SF79">
    <property type="entry name" value="PHOTOSYSTEM I IRON-SULFUR CENTER"/>
    <property type="match status" value="1"/>
</dbReference>
<dbReference type="PANTHER" id="PTHR24960">
    <property type="entry name" value="PHOTOSYSTEM I IRON-SULFUR CENTER-RELATED"/>
    <property type="match status" value="1"/>
</dbReference>
<dbReference type="Pfam" id="PF12838">
    <property type="entry name" value="Fer4_7"/>
    <property type="match status" value="1"/>
</dbReference>
<dbReference type="SUPFAM" id="SSF54862">
    <property type="entry name" value="4Fe-4S ferredoxins"/>
    <property type="match status" value="1"/>
</dbReference>
<dbReference type="PROSITE" id="PS00198">
    <property type="entry name" value="4FE4S_FER_1"/>
    <property type="match status" value="2"/>
</dbReference>
<dbReference type="PROSITE" id="PS51379">
    <property type="entry name" value="4FE4S_FER_2"/>
    <property type="match status" value="2"/>
</dbReference>
<comment type="function">
    <text evidence="2">Apoprotein for the two 4Fe-4S centers FA and FB of photosystem I (PSI); essential for photochemical activity. FB is the terminal electron acceptor of PSI, donating electrons to ferredoxin. The C-terminus interacts with PsaA/B/D and helps assemble the protein into the PSI complex. Required for binding of PsaD and PsaE to PSI. PSI is a plastocyanin-ferredoxin oxidoreductase, converting photonic excitation into a charge separation, which transfers an electron from the donor P700 chlorophyll pair to the spectroscopically characterized acceptors A0, A1, FX, FA and FB in turn.</text>
</comment>
<comment type="catalytic activity">
    <reaction evidence="2">
        <text>reduced [plastocyanin] + hnu + oxidized [2Fe-2S]-[ferredoxin] = oxidized [plastocyanin] + reduced [2Fe-2S]-[ferredoxin]</text>
        <dbReference type="Rhea" id="RHEA:30407"/>
        <dbReference type="Rhea" id="RHEA-COMP:10000"/>
        <dbReference type="Rhea" id="RHEA-COMP:10001"/>
        <dbReference type="Rhea" id="RHEA-COMP:10039"/>
        <dbReference type="Rhea" id="RHEA-COMP:10040"/>
        <dbReference type="ChEBI" id="CHEBI:29036"/>
        <dbReference type="ChEBI" id="CHEBI:30212"/>
        <dbReference type="ChEBI" id="CHEBI:33737"/>
        <dbReference type="ChEBI" id="CHEBI:33738"/>
        <dbReference type="ChEBI" id="CHEBI:49552"/>
        <dbReference type="EC" id="1.97.1.12"/>
    </reaction>
</comment>
<comment type="cofactor">
    <cofactor evidence="2">
        <name>[4Fe-4S] cluster</name>
        <dbReference type="ChEBI" id="CHEBI:49883"/>
    </cofactor>
    <text evidence="2">Binds 2 [4Fe-4S] clusters. Cluster 2 is most probably the spectroscopically characterized electron acceptor FA and cluster 1 is most probably FB.</text>
</comment>
<comment type="subunit">
    <text evidence="2">The eukaryotic PSI reaction center is composed of at least 11 subunits.</text>
</comment>
<comment type="subcellular location">
    <subcellularLocation>
        <location evidence="2">Plastid</location>
        <location evidence="2">Chloroplast thylakoid membrane</location>
        <topology evidence="2">Peripheral membrane protein</topology>
        <orientation evidence="2">Stromal side</orientation>
    </subcellularLocation>
</comment>
<proteinExistence type="inferred from homology"/>
<feature type="initiator methionine" description="Removed" evidence="1">
    <location>
        <position position="1"/>
    </location>
</feature>
<feature type="chain" id="PRO_0000288986" description="Photosystem I iron-sulfur center">
    <location>
        <begin position="2"/>
        <end position="81"/>
    </location>
</feature>
<feature type="domain" description="4Fe-4S ferredoxin-type 1" evidence="2">
    <location>
        <begin position="2"/>
        <end position="31"/>
    </location>
</feature>
<feature type="domain" description="4Fe-4S ferredoxin-type 2" evidence="2">
    <location>
        <begin position="39"/>
        <end position="68"/>
    </location>
</feature>
<feature type="binding site" evidence="2">
    <location>
        <position position="11"/>
    </location>
    <ligand>
        <name>[4Fe-4S] cluster</name>
        <dbReference type="ChEBI" id="CHEBI:49883"/>
        <label>1</label>
    </ligand>
</feature>
<feature type="binding site" evidence="2">
    <location>
        <position position="14"/>
    </location>
    <ligand>
        <name>[4Fe-4S] cluster</name>
        <dbReference type="ChEBI" id="CHEBI:49883"/>
        <label>1</label>
    </ligand>
</feature>
<feature type="binding site" evidence="2">
    <location>
        <position position="17"/>
    </location>
    <ligand>
        <name>[4Fe-4S] cluster</name>
        <dbReference type="ChEBI" id="CHEBI:49883"/>
        <label>1</label>
    </ligand>
</feature>
<feature type="binding site" evidence="2">
    <location>
        <position position="21"/>
    </location>
    <ligand>
        <name>[4Fe-4S] cluster</name>
        <dbReference type="ChEBI" id="CHEBI:49883"/>
        <label>2</label>
    </ligand>
</feature>
<feature type="binding site" evidence="2">
    <location>
        <position position="48"/>
    </location>
    <ligand>
        <name>[4Fe-4S] cluster</name>
        <dbReference type="ChEBI" id="CHEBI:49883"/>
        <label>2</label>
    </ligand>
</feature>
<feature type="binding site" evidence="2">
    <location>
        <position position="51"/>
    </location>
    <ligand>
        <name>[4Fe-4S] cluster</name>
        <dbReference type="ChEBI" id="CHEBI:49883"/>
        <label>2</label>
    </ligand>
</feature>
<feature type="binding site" evidence="2">
    <location>
        <position position="54"/>
    </location>
    <ligand>
        <name>[4Fe-4S] cluster</name>
        <dbReference type="ChEBI" id="CHEBI:49883"/>
        <label>2</label>
    </ligand>
</feature>
<feature type="binding site" evidence="2">
    <location>
        <position position="58"/>
    </location>
    <ligand>
        <name>[4Fe-4S] cluster</name>
        <dbReference type="ChEBI" id="CHEBI:49883"/>
        <label>1</label>
    </ligand>
</feature>
<name>PSAC_ORYSI</name>
<evidence type="ECO:0000250" key="1"/>
<evidence type="ECO:0000255" key="2">
    <source>
        <dbReference type="HAMAP-Rule" id="MF_01303"/>
    </source>
</evidence>
<reference key="1">
    <citation type="journal article" date="2004" name="Plant Physiol.">
        <title>A comparison of rice chloroplast genomes.</title>
        <authorList>
            <person name="Tang J."/>
            <person name="Xia H."/>
            <person name="Cao M."/>
            <person name="Zhang X."/>
            <person name="Zeng W."/>
            <person name="Hu S."/>
            <person name="Tong W."/>
            <person name="Wang J."/>
            <person name="Wang J."/>
            <person name="Yu J."/>
            <person name="Yang H."/>
            <person name="Zhu L."/>
        </authorList>
    </citation>
    <scope>NUCLEOTIDE SEQUENCE [LARGE SCALE GENOMIC DNA]</scope>
    <source>
        <strain>cv. 93-11</strain>
    </source>
</reference>
<keyword id="KW-0004">4Fe-4S</keyword>
<keyword id="KW-0150">Chloroplast</keyword>
<keyword id="KW-0249">Electron transport</keyword>
<keyword id="KW-0408">Iron</keyword>
<keyword id="KW-0411">Iron-sulfur</keyword>
<keyword id="KW-0472">Membrane</keyword>
<keyword id="KW-0479">Metal-binding</keyword>
<keyword id="KW-0560">Oxidoreductase</keyword>
<keyword id="KW-0602">Photosynthesis</keyword>
<keyword id="KW-0603">Photosystem I</keyword>
<keyword id="KW-0934">Plastid</keyword>
<keyword id="KW-1185">Reference proteome</keyword>
<keyword id="KW-0677">Repeat</keyword>
<keyword id="KW-0793">Thylakoid</keyword>
<keyword id="KW-0813">Transport</keyword>
<organism>
    <name type="scientific">Oryza sativa subsp. indica</name>
    <name type="common">Rice</name>
    <dbReference type="NCBI Taxonomy" id="39946"/>
    <lineage>
        <taxon>Eukaryota</taxon>
        <taxon>Viridiplantae</taxon>
        <taxon>Streptophyta</taxon>
        <taxon>Embryophyta</taxon>
        <taxon>Tracheophyta</taxon>
        <taxon>Spermatophyta</taxon>
        <taxon>Magnoliopsida</taxon>
        <taxon>Liliopsida</taxon>
        <taxon>Poales</taxon>
        <taxon>Poaceae</taxon>
        <taxon>BOP clade</taxon>
        <taxon>Oryzoideae</taxon>
        <taxon>Oryzeae</taxon>
        <taxon>Oryzinae</taxon>
        <taxon>Oryza</taxon>
        <taxon>Oryza sativa</taxon>
    </lineage>
</organism>
<accession>P0C360</accession>
<accession>P10794</accession>
<accession>P69414</accession>
<accession>Q6QXX3</accession>
<accession>Q6QY36</accession>
<gene>
    <name evidence="2" type="primary">psaC</name>
    <name type="ORF">9311169</name>
</gene>
<geneLocation type="chloroplast"/>